<protein>
    <recommendedName>
        <fullName evidence="6">Chondroitin sulfate N-acetylgalactosaminyltransferase 1</fullName>
        <shortName evidence="6">CsGalNAcT-1</shortName>
        <ecNumber evidence="1">2.4.1.174</ecNumber>
    </recommendedName>
    <alternativeName>
        <fullName>Chondroitin beta-1,4-N-acetylgalactosaminyltransferase 1</fullName>
        <shortName>Beta4GalNAcT-1</shortName>
    </alternativeName>
</protein>
<proteinExistence type="evidence at transcript level"/>
<feature type="chain" id="PRO_0000189565" description="Chondroitin sulfate N-acetylgalactosaminyltransferase 1">
    <location>
        <begin position="1"/>
        <end position="530"/>
    </location>
</feature>
<feature type="topological domain" description="Cytoplasmic" evidence="2">
    <location>
        <begin position="1"/>
        <end position="12"/>
    </location>
</feature>
<feature type="transmembrane region" description="Helical; Signal-anchor for type II membrane protein" evidence="2">
    <location>
        <begin position="13"/>
        <end position="33"/>
    </location>
</feature>
<feature type="topological domain" description="Lumenal" evidence="2">
    <location>
        <begin position="34"/>
        <end position="530"/>
    </location>
</feature>
<feature type="region of interest" description="Disordered" evidence="3">
    <location>
        <begin position="88"/>
        <end position="107"/>
    </location>
</feature>
<feature type="coiled-coil region" evidence="2">
    <location>
        <begin position="57"/>
        <end position="93"/>
    </location>
</feature>
<feature type="compositionally biased region" description="Polar residues" evidence="3">
    <location>
        <begin position="91"/>
        <end position="105"/>
    </location>
</feature>
<feature type="binding site" evidence="2">
    <location>
        <position position="358"/>
    </location>
    <ligand>
        <name>a divalent metal cation</name>
        <dbReference type="ChEBI" id="CHEBI:60240"/>
    </ligand>
</feature>
<feature type="binding site" evidence="2">
    <location>
        <position position="475"/>
    </location>
    <ligand>
        <name>a divalent metal cation</name>
        <dbReference type="ChEBI" id="CHEBI:60240"/>
    </ligand>
</feature>
<feature type="glycosylation site" description="N-linked (GlcNAc...) asparagine" evidence="2">
    <location>
        <position position="313"/>
    </location>
</feature>
<feature type="glycosylation site" description="N-linked (GlcNAc...) asparagine" evidence="2">
    <location>
        <position position="322"/>
    </location>
</feature>
<feature type="sequence conflict" description="In Ref. 1; BAE25692." evidence="6" ref="1">
    <original>R</original>
    <variation>P</variation>
    <location>
        <position position="163"/>
    </location>
</feature>
<feature type="sequence conflict" description="In Ref. 1; BAC26066." evidence="6" ref="1">
    <original>L</original>
    <variation>M</variation>
    <location>
        <position position="186"/>
    </location>
</feature>
<feature type="sequence conflict" description="In Ref. 1; BAC28340." evidence="6" ref="1">
    <original>L</original>
    <variation>V</variation>
    <location>
        <position position="189"/>
    </location>
</feature>
<feature type="sequence conflict" description="In Ref. 2; AAH89162." evidence="6" ref="2">
    <original>I</original>
    <variation>V</variation>
    <location>
        <position position="393"/>
    </location>
</feature>
<sequence length="530" mass="60917">MVRRGLLGWISRVVILLVLLCCAISVLYMLACTPKGDQEQLGLPRANGPTGKDGYQAVLQEREEQHRNYVNSLKRQIAQLKDELQARSEQFRSGQDQASDATSLRSGWDREPKAQADLLAFLRGQVDKAEVHAGVKLATEYAAVPFDSFTLQKVYQLETGLTRHPEEKPVRKDKRDELVEAIESALESLNSPVESSPHQRPYTAADFIEGIYRTERDKGTLYELTFKGDHKHEFQRLVLFRPFGPIMKVKKEKLNLANTLINVIVPLARRVDKFRHFMQNFREMCIQQDGRVHLTVVYFGKEEMNEVKGILENTSKAANFRNFTFIQLNGEFSRGKGLDVGARFWKGSNVLLFFCDVDIYFTSEFLNTCRLNTQPGKKVFYPVLFSQYNPGVIYGHHDAVPPLGQQLVIKKETGFWRDFGFGMTCQYRSDFINIGGFDLDIKGWGGEDVHLYRKYLHSNLIVVRTPVRGLFHLWHEKHCMDELTPEQYKMCMQSKAMNEASHGQLGMLVFRHEIEAHLRKQKQKASSKKT</sequence>
<evidence type="ECO:0000250" key="1">
    <source>
        <dbReference type="UniProtKB" id="Q8TDX6"/>
    </source>
</evidence>
<evidence type="ECO:0000255" key="2"/>
<evidence type="ECO:0000256" key="3">
    <source>
        <dbReference type="SAM" id="MobiDB-lite"/>
    </source>
</evidence>
<evidence type="ECO:0000269" key="4">
    <source>
    </source>
</evidence>
<evidence type="ECO:0000269" key="5">
    <source>
    </source>
</evidence>
<evidence type="ECO:0000305" key="6"/>
<evidence type="ECO:0000312" key="7">
    <source>
        <dbReference type="MGI" id="MGI:2442354"/>
    </source>
</evidence>
<name>CGAT1_MOUSE</name>
<gene>
    <name evidence="7" type="primary">Csgalnact1</name>
    <name type="synonym">Chgn</name>
    <name type="synonym">Galnact1</name>
</gene>
<accession>Q8BJQ9</accession>
<accession>Q3UNQ5</accession>
<accession>Q3UZX6</accession>
<accession>Q5FWX8</accession>
<accession>Q8BWV9</accession>
<accession>Q8BZU7</accession>
<accession>Q8C195</accession>
<accession>Q8R0M6</accession>
<keyword id="KW-0175">Coiled coil</keyword>
<keyword id="KW-0325">Glycoprotein</keyword>
<keyword id="KW-0333">Golgi apparatus</keyword>
<keyword id="KW-0472">Membrane</keyword>
<keyword id="KW-0479">Metal-binding</keyword>
<keyword id="KW-1185">Reference proteome</keyword>
<keyword id="KW-0735">Signal-anchor</keyword>
<keyword id="KW-0808">Transferase</keyword>
<keyword id="KW-0812">Transmembrane</keyword>
<keyword id="KW-1133">Transmembrane helix</keyword>
<reference key="1">
    <citation type="journal article" date="2005" name="Science">
        <title>The transcriptional landscape of the mammalian genome.</title>
        <authorList>
            <person name="Carninci P."/>
            <person name="Kasukawa T."/>
            <person name="Katayama S."/>
            <person name="Gough J."/>
            <person name="Frith M.C."/>
            <person name="Maeda N."/>
            <person name="Oyama R."/>
            <person name="Ravasi T."/>
            <person name="Lenhard B."/>
            <person name="Wells C."/>
            <person name="Kodzius R."/>
            <person name="Shimokawa K."/>
            <person name="Bajic V.B."/>
            <person name="Brenner S.E."/>
            <person name="Batalov S."/>
            <person name="Forrest A.R."/>
            <person name="Zavolan M."/>
            <person name="Davis M.J."/>
            <person name="Wilming L.G."/>
            <person name="Aidinis V."/>
            <person name="Allen J.E."/>
            <person name="Ambesi-Impiombato A."/>
            <person name="Apweiler R."/>
            <person name="Aturaliya R.N."/>
            <person name="Bailey T.L."/>
            <person name="Bansal M."/>
            <person name="Baxter L."/>
            <person name="Beisel K.W."/>
            <person name="Bersano T."/>
            <person name="Bono H."/>
            <person name="Chalk A.M."/>
            <person name="Chiu K.P."/>
            <person name="Choudhary V."/>
            <person name="Christoffels A."/>
            <person name="Clutterbuck D.R."/>
            <person name="Crowe M.L."/>
            <person name="Dalla E."/>
            <person name="Dalrymple B.P."/>
            <person name="de Bono B."/>
            <person name="Della Gatta G."/>
            <person name="di Bernardo D."/>
            <person name="Down T."/>
            <person name="Engstrom P."/>
            <person name="Fagiolini M."/>
            <person name="Faulkner G."/>
            <person name="Fletcher C.F."/>
            <person name="Fukushima T."/>
            <person name="Furuno M."/>
            <person name="Futaki S."/>
            <person name="Gariboldi M."/>
            <person name="Georgii-Hemming P."/>
            <person name="Gingeras T.R."/>
            <person name="Gojobori T."/>
            <person name="Green R.E."/>
            <person name="Gustincich S."/>
            <person name="Harbers M."/>
            <person name="Hayashi Y."/>
            <person name="Hensch T.K."/>
            <person name="Hirokawa N."/>
            <person name="Hill D."/>
            <person name="Huminiecki L."/>
            <person name="Iacono M."/>
            <person name="Ikeo K."/>
            <person name="Iwama A."/>
            <person name="Ishikawa T."/>
            <person name="Jakt M."/>
            <person name="Kanapin A."/>
            <person name="Katoh M."/>
            <person name="Kawasawa Y."/>
            <person name="Kelso J."/>
            <person name="Kitamura H."/>
            <person name="Kitano H."/>
            <person name="Kollias G."/>
            <person name="Krishnan S.P."/>
            <person name="Kruger A."/>
            <person name="Kummerfeld S.K."/>
            <person name="Kurochkin I.V."/>
            <person name="Lareau L.F."/>
            <person name="Lazarevic D."/>
            <person name="Lipovich L."/>
            <person name="Liu J."/>
            <person name="Liuni S."/>
            <person name="McWilliam S."/>
            <person name="Madan Babu M."/>
            <person name="Madera M."/>
            <person name="Marchionni L."/>
            <person name="Matsuda H."/>
            <person name="Matsuzawa S."/>
            <person name="Miki H."/>
            <person name="Mignone F."/>
            <person name="Miyake S."/>
            <person name="Morris K."/>
            <person name="Mottagui-Tabar S."/>
            <person name="Mulder N."/>
            <person name="Nakano N."/>
            <person name="Nakauchi H."/>
            <person name="Ng P."/>
            <person name="Nilsson R."/>
            <person name="Nishiguchi S."/>
            <person name="Nishikawa S."/>
            <person name="Nori F."/>
            <person name="Ohara O."/>
            <person name="Okazaki Y."/>
            <person name="Orlando V."/>
            <person name="Pang K.C."/>
            <person name="Pavan W.J."/>
            <person name="Pavesi G."/>
            <person name="Pesole G."/>
            <person name="Petrovsky N."/>
            <person name="Piazza S."/>
            <person name="Reed J."/>
            <person name="Reid J.F."/>
            <person name="Ring B.Z."/>
            <person name="Ringwald M."/>
            <person name="Rost B."/>
            <person name="Ruan Y."/>
            <person name="Salzberg S.L."/>
            <person name="Sandelin A."/>
            <person name="Schneider C."/>
            <person name="Schoenbach C."/>
            <person name="Sekiguchi K."/>
            <person name="Semple C.A."/>
            <person name="Seno S."/>
            <person name="Sessa L."/>
            <person name="Sheng Y."/>
            <person name="Shibata Y."/>
            <person name="Shimada H."/>
            <person name="Shimada K."/>
            <person name="Silva D."/>
            <person name="Sinclair B."/>
            <person name="Sperling S."/>
            <person name="Stupka E."/>
            <person name="Sugiura K."/>
            <person name="Sultana R."/>
            <person name="Takenaka Y."/>
            <person name="Taki K."/>
            <person name="Tammoja K."/>
            <person name="Tan S.L."/>
            <person name="Tang S."/>
            <person name="Taylor M.S."/>
            <person name="Tegner J."/>
            <person name="Teichmann S.A."/>
            <person name="Ueda H.R."/>
            <person name="van Nimwegen E."/>
            <person name="Verardo R."/>
            <person name="Wei C.L."/>
            <person name="Yagi K."/>
            <person name="Yamanishi H."/>
            <person name="Zabarovsky E."/>
            <person name="Zhu S."/>
            <person name="Zimmer A."/>
            <person name="Hide W."/>
            <person name="Bult C."/>
            <person name="Grimmond S.M."/>
            <person name="Teasdale R.D."/>
            <person name="Liu E.T."/>
            <person name="Brusic V."/>
            <person name="Quackenbush J."/>
            <person name="Wahlestedt C."/>
            <person name="Mattick J.S."/>
            <person name="Hume D.A."/>
            <person name="Kai C."/>
            <person name="Sasaki D."/>
            <person name="Tomaru Y."/>
            <person name="Fukuda S."/>
            <person name="Kanamori-Katayama M."/>
            <person name="Suzuki M."/>
            <person name="Aoki J."/>
            <person name="Arakawa T."/>
            <person name="Iida J."/>
            <person name="Imamura K."/>
            <person name="Itoh M."/>
            <person name="Kato T."/>
            <person name="Kawaji H."/>
            <person name="Kawagashira N."/>
            <person name="Kawashima T."/>
            <person name="Kojima M."/>
            <person name="Kondo S."/>
            <person name="Konno H."/>
            <person name="Nakano K."/>
            <person name="Ninomiya N."/>
            <person name="Nishio T."/>
            <person name="Okada M."/>
            <person name="Plessy C."/>
            <person name="Shibata K."/>
            <person name="Shiraki T."/>
            <person name="Suzuki S."/>
            <person name="Tagami M."/>
            <person name="Waki K."/>
            <person name="Watahiki A."/>
            <person name="Okamura-Oho Y."/>
            <person name="Suzuki H."/>
            <person name="Kawai J."/>
            <person name="Hayashizaki Y."/>
        </authorList>
    </citation>
    <scope>NUCLEOTIDE SEQUENCE [LARGE SCALE MRNA]</scope>
    <source>
        <strain>C57BL/6J</strain>
        <tissue>Brain cortex</tissue>
        <tissue>Colon</tissue>
        <tissue>Pituitary</tissue>
        <tissue>Skin</tissue>
        <tissue>Spinal cord</tissue>
    </source>
</reference>
<reference key="2">
    <citation type="journal article" date="2004" name="Genome Res.">
        <title>The status, quality, and expansion of the NIH full-length cDNA project: the Mammalian Gene Collection (MGC).</title>
        <authorList>
            <consortium name="The MGC Project Team"/>
        </authorList>
    </citation>
    <scope>NUCLEOTIDE SEQUENCE [LARGE SCALE MRNA]</scope>
    <source>
        <strain>FVB/N</strain>
        <tissue>Kidney</tissue>
    </source>
</reference>
<reference key="3">
    <citation type="journal article" date="2007" name="J. Biol. Chem.">
        <title>Chondroitin sulfate N-acetylgalactosaminyltransferase-1 plays a critical role in chondroitin sulfate synthesis in cartilage.</title>
        <authorList>
            <person name="Sakai K."/>
            <person name="Kimata K."/>
            <person name="Sato T."/>
            <person name="Gotoh M."/>
            <person name="Narimatsu H."/>
            <person name="Shinomiya K."/>
            <person name="Watanabe H."/>
        </authorList>
    </citation>
    <scope>FUNCTION</scope>
    <scope>DEVELOPMENTAL STAGE</scope>
</reference>
<reference key="4">
    <citation type="journal article" date="2011" name="J. Biol. Chem.">
        <title>Chondroitin sulfate N-acetylgalactosaminyltransferase 1 is necessary for normal endochondral ossification and aggrecan metabolism.</title>
        <authorList>
            <person name="Sato T."/>
            <person name="Kudo T."/>
            <person name="Ikehara Y."/>
            <person name="Ogawa H."/>
            <person name="Hirano T."/>
            <person name="Kiyohara K."/>
            <person name="Hagiwara K."/>
            <person name="Togayachi A."/>
            <person name="Ema M."/>
            <person name="Takahashi S."/>
            <person name="Kimata K."/>
            <person name="Watanabe H."/>
            <person name="Narimatsu H."/>
        </authorList>
    </citation>
    <scope>DISRUPTION PHENOTYPE</scope>
    <scope>FUNCTION</scope>
</reference>
<comment type="function">
    <text evidence="4 5">Transfers 1,4-N-acetylgalactosamine (GalNAc) from UDP-GalNAc to the non-reducing end of glucuronic acid (GlcUA). Required for addition of the first GalNAc to the core tetrasaccharide linker and for elongation of chondroitin chains. Important role in chondroitin chain biosynthesis in cartilage formation, and subsequent endochondral ossification (PubMed:17145758, PubMed:21148564). Moreover, is involved in the metabolism of aggrecan (PubMed:21148564).</text>
</comment>
<comment type="catalytic activity">
    <reaction evidence="1">
        <text>3-O-(beta-D-GlcA-(1-&gt;3)-beta-D-Gal-(1-&gt;3)-beta-D-Gal-(1-&gt;4)-beta-D-Xyl)-L-seryl-[protein] + UDP-N-acetyl-alpha-D-galactosamine = 3-O-(beta-D-GalNAc-(1-&gt;4)-beta-D-GlcA-(1-&gt;3)-beta-D-Gal-(1-&gt;3)-beta-D-Gal-(1-&gt;4)-beta-D-Xyl)-L-seryl-[protein] + UDP + H(+)</text>
        <dbReference type="Rhea" id="RHEA:23464"/>
        <dbReference type="Rhea" id="RHEA-COMP:12573"/>
        <dbReference type="Rhea" id="RHEA-COMP:12575"/>
        <dbReference type="ChEBI" id="CHEBI:15378"/>
        <dbReference type="ChEBI" id="CHEBI:58223"/>
        <dbReference type="ChEBI" id="CHEBI:67138"/>
        <dbReference type="ChEBI" id="CHEBI:132093"/>
        <dbReference type="ChEBI" id="CHEBI:132105"/>
        <dbReference type="EC" id="2.4.1.174"/>
    </reaction>
</comment>
<comment type="subcellular location">
    <subcellularLocation>
        <location evidence="6">Golgi apparatus</location>
        <location evidence="6">Golgi stack membrane</location>
        <topology evidence="6">Single-pass type II membrane protein</topology>
    </subcellularLocation>
</comment>
<comment type="developmental stage">
    <text evidence="4">High expression in developing cartilage and during chondrocyte differentiation.</text>
</comment>
<comment type="disruption phenotype">
    <text evidence="5">Deficient mice are viable and fertile, but decreased body weight and length and abnormal cartilage (PubMed:21148564).</text>
</comment>
<comment type="similarity">
    <text evidence="6">Belongs to the chondroitin N-acetylgalactosaminyltransferase family.</text>
</comment>
<comment type="sequence caution" evidence="6">
    <conflict type="erroneous termination">
        <sequence resource="EMBL-CDS" id="BAE25692"/>
    </conflict>
    <text>Truncated C-terminus.</text>
</comment>
<dbReference type="EC" id="2.4.1.174" evidence="1"/>
<dbReference type="EMBL" id="AK028688">
    <property type="protein sequence ID" value="BAC26066.1"/>
    <property type="molecule type" value="mRNA"/>
</dbReference>
<dbReference type="EMBL" id="AK033522">
    <property type="protein sequence ID" value="BAC28340.1"/>
    <property type="molecule type" value="mRNA"/>
</dbReference>
<dbReference type="EMBL" id="AK049770">
    <property type="protein sequence ID" value="BAC33912.1"/>
    <property type="molecule type" value="mRNA"/>
</dbReference>
<dbReference type="EMBL" id="AK080687">
    <property type="protein sequence ID" value="BAC37982.1"/>
    <property type="molecule type" value="mRNA"/>
</dbReference>
<dbReference type="EMBL" id="AK133567">
    <property type="protein sequence ID" value="BAE21729.1"/>
    <property type="molecule type" value="mRNA"/>
</dbReference>
<dbReference type="EMBL" id="AK144089">
    <property type="protein sequence ID" value="BAE25692.1"/>
    <property type="status" value="ALT_SEQ"/>
    <property type="molecule type" value="mRNA"/>
</dbReference>
<dbReference type="EMBL" id="BC026599">
    <property type="protein sequence ID" value="AAH26599.1"/>
    <property type="molecule type" value="mRNA"/>
</dbReference>
<dbReference type="EMBL" id="BC089162">
    <property type="protein sequence ID" value="AAH89162.1"/>
    <property type="molecule type" value="mRNA"/>
</dbReference>
<dbReference type="CCDS" id="CCDS22341.1"/>
<dbReference type="RefSeq" id="NP_001239552.1">
    <property type="nucleotide sequence ID" value="NM_001252623.1"/>
</dbReference>
<dbReference type="RefSeq" id="NP_001351185.1">
    <property type="nucleotide sequence ID" value="NM_001364256.1"/>
</dbReference>
<dbReference type="RefSeq" id="NP_766341.4">
    <property type="nucleotide sequence ID" value="NM_172753.5"/>
</dbReference>
<dbReference type="RefSeq" id="XP_006509687.1">
    <property type="nucleotide sequence ID" value="XM_006509624.3"/>
</dbReference>
<dbReference type="RefSeq" id="XP_006509688.1">
    <property type="nucleotide sequence ID" value="XM_006509625.3"/>
</dbReference>
<dbReference type="RefSeq" id="XP_006509689.1">
    <property type="nucleotide sequence ID" value="XM_006509626.3"/>
</dbReference>
<dbReference type="RefSeq" id="XP_006509690.1">
    <property type="nucleotide sequence ID" value="XM_006509627.5"/>
</dbReference>
<dbReference type="RefSeq" id="XP_006509691.1">
    <property type="nucleotide sequence ID" value="XM_006509628.5"/>
</dbReference>
<dbReference type="RefSeq" id="XP_006509692.1">
    <property type="nucleotide sequence ID" value="XM_006509629.2"/>
</dbReference>
<dbReference type="RefSeq" id="XP_006509693.1">
    <property type="nucleotide sequence ID" value="XM_006509630.5"/>
</dbReference>
<dbReference type="RefSeq" id="XP_011240592.1">
    <property type="nucleotide sequence ID" value="XM_011242290.4"/>
</dbReference>
<dbReference type="SMR" id="Q8BJQ9"/>
<dbReference type="BioGRID" id="231514">
    <property type="interactions" value="2"/>
</dbReference>
<dbReference type="FunCoup" id="Q8BJQ9">
    <property type="interactions" value="700"/>
</dbReference>
<dbReference type="STRING" id="10090.ENSMUSP00000077459"/>
<dbReference type="CAZy" id="GT7">
    <property type="family name" value="Glycosyltransferase Family 7"/>
</dbReference>
<dbReference type="GlyCosmos" id="Q8BJQ9">
    <property type="glycosylation" value="2 sites, No reported glycans"/>
</dbReference>
<dbReference type="GlyGen" id="Q8BJQ9">
    <property type="glycosylation" value="2 sites, 1 N-linked glycan (1 site)"/>
</dbReference>
<dbReference type="iPTMnet" id="Q8BJQ9"/>
<dbReference type="PhosphoSitePlus" id="Q8BJQ9"/>
<dbReference type="PaxDb" id="10090-ENSMUSP00000077459"/>
<dbReference type="ProteomicsDB" id="281401"/>
<dbReference type="Pumba" id="Q8BJQ9"/>
<dbReference type="Antibodypedia" id="22388">
    <property type="antibodies" value="209 antibodies from 26 providers"/>
</dbReference>
<dbReference type="DNASU" id="234356"/>
<dbReference type="Ensembl" id="ENSMUST00000078350.13">
    <property type="protein sequence ID" value="ENSMUSP00000077459.7"/>
    <property type="gene ID" value="ENSMUSG00000036356.16"/>
</dbReference>
<dbReference type="Ensembl" id="ENSMUST00000130214.8">
    <property type="protein sequence ID" value="ENSMUSP00000119817.2"/>
    <property type="gene ID" value="ENSMUSG00000036356.16"/>
</dbReference>
<dbReference type="GeneID" id="234356"/>
<dbReference type="KEGG" id="mmu:234356"/>
<dbReference type="UCSC" id="uc009lwf.3">
    <property type="organism name" value="mouse"/>
</dbReference>
<dbReference type="AGR" id="MGI:2442354"/>
<dbReference type="CTD" id="55790"/>
<dbReference type="MGI" id="MGI:2442354">
    <property type="gene designation" value="Csgalnact1"/>
</dbReference>
<dbReference type="VEuPathDB" id="HostDB:ENSMUSG00000036356"/>
<dbReference type="eggNOG" id="KOG3588">
    <property type="taxonomic scope" value="Eukaryota"/>
</dbReference>
<dbReference type="GeneTree" id="ENSGT01050000244968"/>
<dbReference type="HOGENOM" id="CLU_025958_0_1_1"/>
<dbReference type="InParanoid" id="Q8BJQ9"/>
<dbReference type="OMA" id="IVVYFGE"/>
<dbReference type="OrthoDB" id="431432at2759"/>
<dbReference type="PhylomeDB" id="Q8BJQ9"/>
<dbReference type="TreeFam" id="TF318303"/>
<dbReference type="BRENDA" id="2.4.1.174">
    <property type="organism ID" value="3474"/>
</dbReference>
<dbReference type="Reactome" id="R-MMU-2022870">
    <property type="pathway name" value="Chondroitin sulfate biosynthesis"/>
</dbReference>
<dbReference type="BioGRID-ORCS" id="234356">
    <property type="hits" value="2 hits in 76 CRISPR screens"/>
</dbReference>
<dbReference type="ChiTaRS" id="Csgalnact1">
    <property type="organism name" value="mouse"/>
</dbReference>
<dbReference type="PRO" id="PR:Q8BJQ9"/>
<dbReference type="Proteomes" id="UP000000589">
    <property type="component" value="Chromosome 8"/>
</dbReference>
<dbReference type="RNAct" id="Q8BJQ9">
    <property type="molecule type" value="protein"/>
</dbReference>
<dbReference type="Bgee" id="ENSMUSG00000036356">
    <property type="expression patterns" value="Expressed in stroma of bone marrow and 223 other cell types or tissues"/>
</dbReference>
<dbReference type="ExpressionAtlas" id="Q8BJQ9">
    <property type="expression patterns" value="baseline and differential"/>
</dbReference>
<dbReference type="GO" id="GO:0005794">
    <property type="term" value="C:Golgi apparatus"/>
    <property type="evidence" value="ECO:0000314"/>
    <property type="project" value="MGI"/>
</dbReference>
<dbReference type="GO" id="GO:0032580">
    <property type="term" value="C:Golgi cisterna membrane"/>
    <property type="evidence" value="ECO:0007669"/>
    <property type="project" value="UniProtKB-SubCell"/>
</dbReference>
<dbReference type="GO" id="GO:0008376">
    <property type="term" value="F:acetylgalactosaminyltransferase activity"/>
    <property type="evidence" value="ECO:0000250"/>
    <property type="project" value="UniProtKB"/>
</dbReference>
<dbReference type="GO" id="GO:0047238">
    <property type="term" value="F:glucuronosyl-N-acetylgalactosaminyl-proteoglycan 4-beta-N-acetylgalactosaminyltransferase activity"/>
    <property type="evidence" value="ECO:0000315"/>
    <property type="project" value="MGI"/>
</dbReference>
<dbReference type="GO" id="GO:0015020">
    <property type="term" value="F:glucuronosyltransferase activity"/>
    <property type="evidence" value="ECO:0000250"/>
    <property type="project" value="UniProtKB"/>
</dbReference>
<dbReference type="GO" id="GO:0047237">
    <property type="term" value="F:glucuronylgalactosylproteoglycan 4-beta-N-acetylgalactosaminyltransferase activity"/>
    <property type="evidence" value="ECO:0000250"/>
    <property type="project" value="UniProtKB"/>
</dbReference>
<dbReference type="GO" id="GO:0046872">
    <property type="term" value="F:metal ion binding"/>
    <property type="evidence" value="ECO:0007669"/>
    <property type="project" value="UniProtKB-KW"/>
</dbReference>
<dbReference type="GO" id="GO:0008955">
    <property type="term" value="F:peptidoglycan glycosyltransferase activity"/>
    <property type="evidence" value="ECO:0000250"/>
    <property type="project" value="UniProtKB"/>
</dbReference>
<dbReference type="GO" id="GO:0051216">
    <property type="term" value="P:cartilage development"/>
    <property type="evidence" value="ECO:0000315"/>
    <property type="project" value="MGI"/>
</dbReference>
<dbReference type="GO" id="GO:0050650">
    <property type="term" value="P:chondroitin sulfate proteoglycan biosynthetic process"/>
    <property type="evidence" value="ECO:0000315"/>
    <property type="project" value="MGI"/>
</dbReference>
<dbReference type="GO" id="GO:0050654">
    <property type="term" value="P:chondroitin sulfate proteoglycan metabolic process"/>
    <property type="evidence" value="ECO:0000315"/>
    <property type="project" value="MGI"/>
</dbReference>
<dbReference type="GO" id="GO:0001958">
    <property type="term" value="P:endochondral ossification"/>
    <property type="evidence" value="ECO:0000315"/>
    <property type="project" value="MGI"/>
</dbReference>
<dbReference type="GO" id="GO:0030198">
    <property type="term" value="P:extracellular matrix organization"/>
    <property type="evidence" value="ECO:0000315"/>
    <property type="project" value="MGI"/>
</dbReference>
<dbReference type="GO" id="GO:0046398">
    <property type="term" value="P:UDP-glucuronate metabolic process"/>
    <property type="evidence" value="ECO:0000250"/>
    <property type="project" value="UniProtKB"/>
</dbReference>
<dbReference type="GO" id="GO:0019276">
    <property type="term" value="P:UDP-N-acetylgalactosamine metabolic process"/>
    <property type="evidence" value="ECO:0000250"/>
    <property type="project" value="UniProtKB"/>
</dbReference>
<dbReference type="FunFam" id="3.90.550.10:FF:000059">
    <property type="entry name" value="Hexosyltransferase"/>
    <property type="match status" value="1"/>
</dbReference>
<dbReference type="Gene3D" id="3.90.550.10">
    <property type="entry name" value="Spore Coat Polysaccharide Biosynthesis Protein SpsA, Chain A"/>
    <property type="match status" value="1"/>
</dbReference>
<dbReference type="InterPro" id="IPR008428">
    <property type="entry name" value="Chond_GalNAc"/>
</dbReference>
<dbReference type="InterPro" id="IPR051227">
    <property type="entry name" value="CS_glycosyltransferase"/>
</dbReference>
<dbReference type="InterPro" id="IPR029044">
    <property type="entry name" value="Nucleotide-diphossugar_trans"/>
</dbReference>
<dbReference type="PANTHER" id="PTHR12369:SF19">
    <property type="entry name" value="CHONDROITIN SULFATE N-ACETYLGALACTOSAMINYLTRANSFERASE 1"/>
    <property type="match status" value="1"/>
</dbReference>
<dbReference type="PANTHER" id="PTHR12369">
    <property type="entry name" value="CHONDROITIN SYNTHASE"/>
    <property type="match status" value="1"/>
</dbReference>
<dbReference type="Pfam" id="PF05679">
    <property type="entry name" value="CHGN"/>
    <property type="match status" value="1"/>
</dbReference>
<dbReference type="SUPFAM" id="SSF53448">
    <property type="entry name" value="Nucleotide-diphospho-sugar transferases"/>
    <property type="match status" value="1"/>
</dbReference>
<organism>
    <name type="scientific">Mus musculus</name>
    <name type="common">Mouse</name>
    <dbReference type="NCBI Taxonomy" id="10090"/>
    <lineage>
        <taxon>Eukaryota</taxon>
        <taxon>Metazoa</taxon>
        <taxon>Chordata</taxon>
        <taxon>Craniata</taxon>
        <taxon>Vertebrata</taxon>
        <taxon>Euteleostomi</taxon>
        <taxon>Mammalia</taxon>
        <taxon>Eutheria</taxon>
        <taxon>Euarchontoglires</taxon>
        <taxon>Glires</taxon>
        <taxon>Rodentia</taxon>
        <taxon>Myomorpha</taxon>
        <taxon>Muroidea</taxon>
        <taxon>Muridae</taxon>
        <taxon>Murinae</taxon>
        <taxon>Mus</taxon>
        <taxon>Mus</taxon>
    </lineage>
</organism>